<comment type="function">
    <text evidence="2 3">Palmitoyltransferase that catalyzes the addition of palmitate onto various protein substrates (By similarity). Palmitoylates sex steroid hormone receptors, including ESR1, PGR and AR, thereby regulating their targeting to the plasma membrane. This affects rapid intracellular signaling by sex hormones via ERK and AKT kinases and the generation of cAMP, but does not affect that mediated by their nuclear receptor (By similarity). Palmitoylates FYN, regulates its localization in hair follicles and plays a key role in epidermal homeostasis and hair follicle differentiation. Through the palmitoylation of PLCB1 and the regulation of PLCB1 downstream signaling may indirectly regulate the function of the endothelial barrier and the adhesion of leukocytes to the endothelium. Also has a palmitoyltransferase activity toward ADRA1D, positively regulating its activity and expression and may thereby play a role in vascular contraction. May also palmitoylate eNOS and LCK (By similarity).</text>
</comment>
<comment type="catalytic activity">
    <reaction evidence="3">
        <text>L-cysteinyl-[protein] + hexadecanoyl-CoA = S-hexadecanoyl-L-cysteinyl-[protein] + CoA</text>
        <dbReference type="Rhea" id="RHEA:36683"/>
        <dbReference type="Rhea" id="RHEA-COMP:10131"/>
        <dbReference type="Rhea" id="RHEA-COMP:11032"/>
        <dbReference type="ChEBI" id="CHEBI:29950"/>
        <dbReference type="ChEBI" id="CHEBI:57287"/>
        <dbReference type="ChEBI" id="CHEBI:57379"/>
        <dbReference type="ChEBI" id="CHEBI:74151"/>
        <dbReference type="EC" id="2.3.1.225"/>
    </reaction>
    <physiologicalReaction direction="left-to-right" evidence="3">
        <dbReference type="Rhea" id="RHEA:36684"/>
    </physiologicalReaction>
</comment>
<comment type="subcellular location">
    <subcellularLocation>
        <location evidence="2">Golgi apparatus membrane</location>
        <topology evidence="4">Multi-pass membrane protein</topology>
    </subcellularLocation>
    <subcellularLocation>
        <location evidence="3">Golgi apparatus</location>
        <location evidence="3">cis-Golgi network membrane</location>
        <topology evidence="4">Multi-pass membrane protein</topology>
    </subcellularLocation>
    <subcellularLocation>
        <location evidence="2">Cell membrane</location>
        <topology evidence="4">Multi-pass membrane protein</topology>
    </subcellularLocation>
</comment>
<comment type="domain">
    <text evidence="1">The DHHC domain is required for palmitoyltransferase activity.</text>
</comment>
<comment type="similarity">
    <text evidence="6">Belongs to the DHHC palmitoyltransferase family.</text>
</comment>
<sequence length="265" mass="31385">MGLRIHFVVDPHGWCCMGLIVFVWLYNIVLIPKIVLFPHYEEGHIPGILIIIFYGISIFCLVALVRASITDPGRLPENPKIPHGEREFWELCNKCNLMRPKRSHHCSRCGHCVRRMDHHCPWINNCVGEDNHWLFLQLCFYTELLTCYALMFSFCHYYYFLPLKKRNLDLFVFRHELAIMRLAAFMGITMLVGITGLFYTQLIGIITDTTSIEKMSNCCEDISRPRKPWQQTFSEVFGTRWKILWFIPFRQRQPLRVPYHFANHV</sequence>
<name>ZDH21_PONAB</name>
<feature type="chain" id="PRO_0000212910" description="Palmitoyltransferase ZDHHC21">
    <location>
        <begin position="1"/>
        <end position="265"/>
    </location>
</feature>
<feature type="topological domain" description="Cytoplasmic" evidence="6">
    <location>
        <begin position="1"/>
        <end position="16"/>
    </location>
</feature>
<feature type="transmembrane region" description="Helical" evidence="4">
    <location>
        <begin position="17"/>
        <end position="37"/>
    </location>
</feature>
<feature type="topological domain" description="Extracellular" evidence="6">
    <location>
        <begin position="38"/>
        <end position="44"/>
    </location>
</feature>
<feature type="transmembrane region" description="Helical" evidence="4">
    <location>
        <begin position="45"/>
        <end position="65"/>
    </location>
</feature>
<feature type="topological domain" description="Cytoplasmic" evidence="6">
    <location>
        <begin position="66"/>
        <end position="133"/>
    </location>
</feature>
<feature type="transmembrane region" description="Helical" evidence="4">
    <location>
        <begin position="134"/>
        <end position="154"/>
    </location>
</feature>
<feature type="topological domain" description="Extracellular" evidence="6">
    <location>
        <begin position="155"/>
        <end position="185"/>
    </location>
</feature>
<feature type="transmembrane region" description="Helical" evidence="4">
    <location>
        <begin position="186"/>
        <end position="206"/>
    </location>
</feature>
<feature type="topological domain" description="Cytoplasmic" evidence="6">
    <location>
        <begin position="207"/>
        <end position="265"/>
    </location>
</feature>
<feature type="domain" description="DHHC" evidence="5">
    <location>
        <begin position="90"/>
        <end position="140"/>
    </location>
</feature>
<feature type="active site" description="S-palmitoyl cysteine intermediate" evidence="3">
    <location>
        <position position="120"/>
    </location>
</feature>
<evidence type="ECO:0000250" key="1">
    <source>
        <dbReference type="UniProtKB" id="Q8IUH5"/>
    </source>
</evidence>
<evidence type="ECO:0000250" key="2">
    <source>
        <dbReference type="UniProtKB" id="Q8IVQ6"/>
    </source>
</evidence>
<evidence type="ECO:0000250" key="3">
    <source>
        <dbReference type="UniProtKB" id="Q9D270"/>
    </source>
</evidence>
<evidence type="ECO:0000255" key="4"/>
<evidence type="ECO:0000255" key="5">
    <source>
        <dbReference type="PROSITE-ProRule" id="PRU00067"/>
    </source>
</evidence>
<evidence type="ECO:0000305" key="6"/>
<reference key="1">
    <citation type="submission" date="2004-11" db="EMBL/GenBank/DDBJ databases">
        <authorList>
            <consortium name="The German cDNA consortium"/>
        </authorList>
    </citation>
    <scope>NUCLEOTIDE SEQUENCE [LARGE SCALE MRNA]</scope>
    <source>
        <tissue>Brain cortex</tissue>
    </source>
</reference>
<gene>
    <name evidence="2" type="primary">ZDHHC21</name>
</gene>
<keyword id="KW-0012">Acyltransferase</keyword>
<keyword id="KW-1003">Cell membrane</keyword>
<keyword id="KW-0333">Golgi apparatus</keyword>
<keyword id="KW-0449">Lipoprotein</keyword>
<keyword id="KW-0472">Membrane</keyword>
<keyword id="KW-0564">Palmitate</keyword>
<keyword id="KW-1185">Reference proteome</keyword>
<keyword id="KW-0808">Transferase</keyword>
<keyword id="KW-0812">Transmembrane</keyword>
<keyword id="KW-1133">Transmembrane helix</keyword>
<protein>
    <recommendedName>
        <fullName evidence="6">Palmitoyltransferase ZDHHC21</fullName>
        <ecNumber evidence="2">2.3.1.225</ecNumber>
    </recommendedName>
    <alternativeName>
        <fullName evidence="2">Zinc finger DHHC domain-containing protein 21</fullName>
    </alternativeName>
</protein>
<organism>
    <name type="scientific">Pongo abelii</name>
    <name type="common">Sumatran orangutan</name>
    <name type="synonym">Pongo pygmaeus abelii</name>
    <dbReference type="NCBI Taxonomy" id="9601"/>
    <lineage>
        <taxon>Eukaryota</taxon>
        <taxon>Metazoa</taxon>
        <taxon>Chordata</taxon>
        <taxon>Craniata</taxon>
        <taxon>Vertebrata</taxon>
        <taxon>Euteleostomi</taxon>
        <taxon>Mammalia</taxon>
        <taxon>Eutheria</taxon>
        <taxon>Euarchontoglires</taxon>
        <taxon>Primates</taxon>
        <taxon>Haplorrhini</taxon>
        <taxon>Catarrhini</taxon>
        <taxon>Hominidae</taxon>
        <taxon>Pongo</taxon>
    </lineage>
</organism>
<proteinExistence type="evidence at transcript level"/>
<accession>Q5RB84</accession>
<dbReference type="EC" id="2.3.1.225" evidence="2"/>
<dbReference type="EMBL" id="CR858769">
    <property type="protein sequence ID" value="CAH90976.1"/>
    <property type="molecule type" value="mRNA"/>
</dbReference>
<dbReference type="RefSeq" id="NP_001125563.1">
    <property type="nucleotide sequence ID" value="NM_001132091.1"/>
</dbReference>
<dbReference type="RefSeq" id="XP_009242710.1">
    <property type="nucleotide sequence ID" value="XM_009244435.1"/>
</dbReference>
<dbReference type="RefSeq" id="XP_063569937.1">
    <property type="nucleotide sequence ID" value="XM_063713867.1"/>
</dbReference>
<dbReference type="SMR" id="Q5RB84"/>
<dbReference type="FunCoup" id="Q5RB84">
    <property type="interactions" value="1555"/>
</dbReference>
<dbReference type="STRING" id="9601.ENSPPYP00000021521"/>
<dbReference type="GeneID" id="100172477"/>
<dbReference type="KEGG" id="pon:100172477"/>
<dbReference type="CTD" id="340481"/>
<dbReference type="eggNOG" id="KOG1311">
    <property type="taxonomic scope" value="Eukaryota"/>
</dbReference>
<dbReference type="HOGENOM" id="CLU_048061_3_0_1"/>
<dbReference type="InParanoid" id="Q5RB84"/>
<dbReference type="OrthoDB" id="331948at2759"/>
<dbReference type="TreeFam" id="TF319798"/>
<dbReference type="Proteomes" id="UP000001595">
    <property type="component" value="Chromosome 9"/>
</dbReference>
<dbReference type="GO" id="GO:0005794">
    <property type="term" value="C:Golgi apparatus"/>
    <property type="evidence" value="ECO:0000250"/>
    <property type="project" value="UniProtKB"/>
</dbReference>
<dbReference type="GO" id="GO:0000139">
    <property type="term" value="C:Golgi membrane"/>
    <property type="evidence" value="ECO:0007669"/>
    <property type="project" value="UniProtKB-SubCell"/>
</dbReference>
<dbReference type="GO" id="GO:0005886">
    <property type="term" value="C:plasma membrane"/>
    <property type="evidence" value="ECO:0007669"/>
    <property type="project" value="UniProtKB-SubCell"/>
</dbReference>
<dbReference type="GO" id="GO:0019706">
    <property type="term" value="F:protein-cysteine S-palmitoyltransferase activity"/>
    <property type="evidence" value="ECO:0000250"/>
    <property type="project" value="UniProtKB"/>
</dbReference>
<dbReference type="GO" id="GO:0071875">
    <property type="term" value="P:adrenergic receptor signaling pathway"/>
    <property type="evidence" value="ECO:0000250"/>
    <property type="project" value="UniProtKB"/>
</dbReference>
<dbReference type="GO" id="GO:0018230">
    <property type="term" value="P:peptidyl-L-cysteine S-palmitoylation"/>
    <property type="evidence" value="ECO:0000250"/>
    <property type="project" value="UniProtKB"/>
</dbReference>
<dbReference type="GO" id="GO:1903140">
    <property type="term" value="P:regulation of establishment of endothelial barrier"/>
    <property type="evidence" value="ECO:0000250"/>
    <property type="project" value="UniProtKB"/>
</dbReference>
<dbReference type="GO" id="GO:1904997">
    <property type="term" value="P:regulation of leukocyte adhesion to arterial endothelial cell"/>
    <property type="evidence" value="ECO:0000250"/>
    <property type="project" value="UniProtKB"/>
</dbReference>
<dbReference type="GO" id="GO:0003056">
    <property type="term" value="P:regulation of vascular associated smooth muscle contraction"/>
    <property type="evidence" value="ECO:0000250"/>
    <property type="project" value="UniProtKB"/>
</dbReference>
<dbReference type="InterPro" id="IPR001594">
    <property type="entry name" value="Palmitoyltrfase_DHHC"/>
</dbReference>
<dbReference type="InterPro" id="IPR039859">
    <property type="entry name" value="PFA4/ZDH16/20/ERF2-like"/>
</dbReference>
<dbReference type="PANTHER" id="PTHR12246">
    <property type="entry name" value="PALMITOYLTRANSFERASE ZDHHC16"/>
    <property type="match status" value="1"/>
</dbReference>
<dbReference type="Pfam" id="PF01529">
    <property type="entry name" value="DHHC"/>
    <property type="match status" value="1"/>
</dbReference>
<dbReference type="PROSITE" id="PS50216">
    <property type="entry name" value="DHHC"/>
    <property type="match status" value="1"/>
</dbReference>